<proteinExistence type="evidence at transcript level"/>
<comment type="function">
    <text evidence="1 4">Involved in the import of GDP-mannose from the cytoplasm into the Golgi lumen.</text>
</comment>
<comment type="subunit">
    <text evidence="1">Homooligomer.</text>
</comment>
<comment type="subcellular location">
    <subcellularLocation>
        <location evidence="1">Golgi apparatus membrane</location>
        <topology evidence="1">Multi-pass membrane protein</topology>
    </subcellularLocation>
    <subcellularLocation>
        <location evidence="1">Cytoplasmic vesicle membrane</location>
        <topology evidence="1">Multi-pass membrane protein</topology>
    </subcellularLocation>
    <subcellularLocation>
        <location evidence="1">Endoplasmic reticulum membrane</location>
        <topology evidence="1">Multi-pass membrane protein</topology>
    </subcellularLocation>
</comment>
<comment type="similarity">
    <text evidence="5">Belongs to the TPT transporter family. SLC35D subfamily.</text>
</comment>
<reference key="1">
    <citation type="journal article" date="2007" name="Eukaryot. Cell">
        <title>The pathogenic fungus Cryptococcus neoformans expresses two functional GDP-mannose transporters with distinct expression patterns and roles in capsule synthesis.</title>
        <authorList>
            <person name="Cottrell T.R."/>
            <person name="Griffith C.L."/>
            <person name="Liu H."/>
            <person name="Nenninger A.A."/>
            <person name="Doering T.L."/>
        </authorList>
    </citation>
    <scope>NUCLEOTIDE SEQUENCE [MRNA]</scope>
    <scope>FUNCTION</scope>
</reference>
<reference key="2">
    <citation type="journal article" date="2005" name="Science">
        <title>The genome of the basidiomycetous yeast and human pathogen Cryptococcus neoformans.</title>
        <authorList>
            <person name="Loftus B.J."/>
            <person name="Fung E."/>
            <person name="Roncaglia P."/>
            <person name="Rowley D."/>
            <person name="Amedeo P."/>
            <person name="Bruno D."/>
            <person name="Vamathevan J."/>
            <person name="Miranda M."/>
            <person name="Anderson I.J."/>
            <person name="Fraser J.A."/>
            <person name="Allen J.E."/>
            <person name="Bosdet I.E."/>
            <person name="Brent M.R."/>
            <person name="Chiu R."/>
            <person name="Doering T.L."/>
            <person name="Donlin M.J."/>
            <person name="D'Souza C.A."/>
            <person name="Fox D.S."/>
            <person name="Grinberg V."/>
            <person name="Fu J."/>
            <person name="Fukushima M."/>
            <person name="Haas B.J."/>
            <person name="Huang J.C."/>
            <person name="Janbon G."/>
            <person name="Jones S.J.M."/>
            <person name="Koo H.L."/>
            <person name="Krzywinski M.I."/>
            <person name="Kwon-Chung K.J."/>
            <person name="Lengeler K.B."/>
            <person name="Maiti R."/>
            <person name="Marra M.A."/>
            <person name="Marra R.E."/>
            <person name="Mathewson C.A."/>
            <person name="Mitchell T.G."/>
            <person name="Pertea M."/>
            <person name="Riggs F.R."/>
            <person name="Salzberg S.L."/>
            <person name="Schein J.E."/>
            <person name="Shvartsbeyn A."/>
            <person name="Shin H."/>
            <person name="Shumway M."/>
            <person name="Specht C.A."/>
            <person name="Suh B.B."/>
            <person name="Tenney A."/>
            <person name="Utterback T.R."/>
            <person name="Wickes B.L."/>
            <person name="Wortman J.R."/>
            <person name="Wye N.H."/>
            <person name="Kronstad J.W."/>
            <person name="Lodge J.K."/>
            <person name="Heitman J."/>
            <person name="Davis R.W."/>
            <person name="Fraser C.M."/>
            <person name="Hyman R.W."/>
        </authorList>
    </citation>
    <scope>NUCLEOTIDE SEQUENCE [LARGE SCALE GENOMIC DNA]</scope>
    <source>
        <strain>JEC21 / ATCC MYA-565</strain>
    </source>
</reference>
<gene>
    <name type="primary">GMT2</name>
    <name type="synonym">VRG4-2</name>
    <name type="ordered locus">CNG01600</name>
</gene>
<dbReference type="EMBL" id="AY428959">
    <property type="protein sequence ID" value="AAR96298.1"/>
    <property type="molecule type" value="mRNA"/>
</dbReference>
<dbReference type="EMBL" id="AE017347">
    <property type="protein sequence ID" value="AAW44567.1"/>
    <property type="molecule type" value="Genomic_DNA"/>
</dbReference>
<dbReference type="RefSeq" id="XP_571874.1">
    <property type="nucleotide sequence ID" value="XM_571874.1"/>
</dbReference>
<dbReference type="SMR" id="P0CS04"/>
<dbReference type="FunCoup" id="P0CS04">
    <property type="interactions" value="179"/>
</dbReference>
<dbReference type="STRING" id="214684.P0CS04"/>
<dbReference type="TCDB" id="2.A.7.13.7">
    <property type="family name" value="the drug/metabolite transporter (dmt) superfamily"/>
</dbReference>
<dbReference type="PaxDb" id="214684-P0CS04"/>
<dbReference type="EnsemblFungi" id="AAW44567">
    <property type="protein sequence ID" value="AAW44567"/>
    <property type="gene ID" value="CNG01600"/>
</dbReference>
<dbReference type="GeneID" id="3258778"/>
<dbReference type="KEGG" id="cne:CNG01600"/>
<dbReference type="VEuPathDB" id="FungiDB:CNG01600"/>
<dbReference type="eggNOG" id="KOG1444">
    <property type="taxonomic scope" value="Eukaryota"/>
</dbReference>
<dbReference type="HOGENOM" id="CLU_025360_1_2_1"/>
<dbReference type="InParanoid" id="P0CS04"/>
<dbReference type="OMA" id="VWMLINC"/>
<dbReference type="OrthoDB" id="417037at2759"/>
<dbReference type="PHI-base" id="PHI:3490"/>
<dbReference type="Proteomes" id="UP000002149">
    <property type="component" value="Chromosome 7"/>
</dbReference>
<dbReference type="GO" id="GO:0030659">
    <property type="term" value="C:cytoplasmic vesicle membrane"/>
    <property type="evidence" value="ECO:0007669"/>
    <property type="project" value="UniProtKB-SubCell"/>
</dbReference>
<dbReference type="GO" id="GO:0005789">
    <property type="term" value="C:endoplasmic reticulum membrane"/>
    <property type="evidence" value="ECO:0007669"/>
    <property type="project" value="UniProtKB-SubCell"/>
</dbReference>
<dbReference type="GO" id="GO:0005794">
    <property type="term" value="C:Golgi apparatus"/>
    <property type="evidence" value="ECO:0000318"/>
    <property type="project" value="GO_Central"/>
</dbReference>
<dbReference type="GO" id="GO:0000139">
    <property type="term" value="C:Golgi membrane"/>
    <property type="evidence" value="ECO:0007669"/>
    <property type="project" value="UniProtKB-SubCell"/>
</dbReference>
<dbReference type="GO" id="GO:0015297">
    <property type="term" value="F:antiporter activity"/>
    <property type="evidence" value="ECO:0000318"/>
    <property type="project" value="GO_Central"/>
</dbReference>
<dbReference type="GO" id="GO:0005458">
    <property type="term" value="F:GDP-mannose transmembrane transporter activity"/>
    <property type="evidence" value="ECO:0000318"/>
    <property type="project" value="GO_Central"/>
</dbReference>
<dbReference type="GO" id="GO:1990570">
    <property type="term" value="P:GDP-mannose transmembrane transport"/>
    <property type="evidence" value="ECO:0000318"/>
    <property type="project" value="GO_Central"/>
</dbReference>
<dbReference type="InterPro" id="IPR013657">
    <property type="entry name" value="SCL35B1-4/HUT1"/>
</dbReference>
<dbReference type="InterPro" id="IPR050186">
    <property type="entry name" value="TPT_transporter"/>
</dbReference>
<dbReference type="NCBIfam" id="TIGR00803">
    <property type="entry name" value="nst"/>
    <property type="match status" value="1"/>
</dbReference>
<dbReference type="PANTHER" id="PTHR11132">
    <property type="entry name" value="SOLUTE CARRIER FAMILY 35"/>
    <property type="match status" value="1"/>
</dbReference>
<dbReference type="Pfam" id="PF08449">
    <property type="entry name" value="UAA"/>
    <property type="match status" value="1"/>
</dbReference>
<name>GMT2_CRYNJ</name>
<protein>
    <recommendedName>
        <fullName>GDP-mannose transporter 2</fullName>
        <shortName>GMT 2</shortName>
    </recommendedName>
</protein>
<sequence>MASYTPSSSRPHTPLGLSPRGSYTNLASAAYDASSPGGHGAKDEKERLRAEREVQEALLKAQDGVEKAKKEEVCMPASTTVLPILSYCVASIMMTVVNKFVVSGRQFTMTFLLLAIQSFVCVACVWLAKRIGVINFRDWDMNDAKAWFPVSSLLVAVIYTGSKSLQFLSIPVYTIFKNLTIILIAYGEVIWFGGHVTPLTLCSFFLMVGSSVIAAWADISTTLSKLSAGVAVVDPISGADVPLSSISVMDTMNVGYLWMFINCLASAGYVLFMRKRIKVTGFKDWDSMFYNNLLSIPVLFVFSLIIEDWGAASFSRNFPEEGRAFLLSAIAFSGAAAVFISYSTAWCVRICGATTYSLVGALNKLPVAASGILFFGDPVNFGNVSAILVGGVSGIVYAVAKTNQAKVEKSKQARGGESKA</sequence>
<organism>
    <name type="scientific">Cryptococcus neoformans var. neoformans serotype D (strain JEC21 / ATCC MYA-565)</name>
    <name type="common">Filobasidiella neoformans</name>
    <dbReference type="NCBI Taxonomy" id="214684"/>
    <lineage>
        <taxon>Eukaryota</taxon>
        <taxon>Fungi</taxon>
        <taxon>Dikarya</taxon>
        <taxon>Basidiomycota</taxon>
        <taxon>Agaricomycotina</taxon>
        <taxon>Tremellomycetes</taxon>
        <taxon>Tremellales</taxon>
        <taxon>Cryptococcaceae</taxon>
        <taxon>Cryptococcus</taxon>
        <taxon>Cryptococcus neoformans species complex</taxon>
    </lineage>
</organism>
<evidence type="ECO:0000250" key="1"/>
<evidence type="ECO:0000255" key="2"/>
<evidence type="ECO:0000256" key="3">
    <source>
        <dbReference type="SAM" id="MobiDB-lite"/>
    </source>
</evidence>
<evidence type="ECO:0000269" key="4">
    <source>
    </source>
</evidence>
<evidence type="ECO:0000305" key="5"/>
<feature type="chain" id="PRO_0000333521" description="GDP-mannose transporter 2">
    <location>
        <begin position="1"/>
        <end position="420"/>
    </location>
</feature>
<feature type="topological domain" description="Cytoplasmic" evidence="1">
    <location>
        <begin position="1"/>
        <end position="76"/>
    </location>
</feature>
<feature type="transmembrane region" description="Helical" evidence="2">
    <location>
        <begin position="77"/>
        <end position="97"/>
    </location>
</feature>
<feature type="topological domain" description="Lumenal" evidence="1">
    <location>
        <begin position="98"/>
        <end position="106"/>
    </location>
</feature>
<feature type="transmembrane region" description="Helical" evidence="2">
    <location>
        <begin position="107"/>
        <end position="127"/>
    </location>
</feature>
<feature type="topological domain" description="Cytoplasmic" evidence="1">
    <location>
        <begin position="128"/>
        <end position="145"/>
    </location>
</feature>
<feature type="transmembrane region" description="Helical" evidence="2">
    <location>
        <begin position="146"/>
        <end position="168"/>
    </location>
</feature>
<feature type="topological domain" description="Lumenal" evidence="1">
    <location>
        <begin position="169"/>
        <end position="171"/>
    </location>
</feature>
<feature type="transmembrane region" description="Helical" evidence="2">
    <location>
        <begin position="172"/>
        <end position="194"/>
    </location>
</feature>
<feature type="topological domain" description="Cytoplasmic" evidence="1">
    <location>
        <begin position="195"/>
        <end position="200"/>
    </location>
</feature>
<feature type="transmembrane region" description="Helical" evidence="2">
    <location>
        <begin position="201"/>
        <end position="223"/>
    </location>
</feature>
<feature type="topological domain" description="Lumenal" evidence="1">
    <location>
        <begin position="224"/>
        <end position="251"/>
    </location>
</feature>
<feature type="transmembrane region" description="Helical" evidence="2">
    <location>
        <begin position="252"/>
        <end position="272"/>
    </location>
</feature>
<feature type="topological domain" description="Cytoplasmic" evidence="1">
    <location>
        <begin position="273"/>
        <end position="293"/>
    </location>
</feature>
<feature type="transmembrane region" description="Helical" evidence="2">
    <location>
        <begin position="294"/>
        <end position="314"/>
    </location>
</feature>
<feature type="topological domain" description="Lumenal" evidence="1">
    <location>
        <begin position="315"/>
        <end position="323"/>
    </location>
</feature>
<feature type="transmembrane region" description="Helical" evidence="2">
    <location>
        <begin position="324"/>
        <end position="344"/>
    </location>
</feature>
<feature type="topological domain" description="Cytoplasmic" evidence="1">
    <location>
        <begin position="345"/>
        <end position="355"/>
    </location>
</feature>
<feature type="transmembrane region" description="Helical" evidence="2">
    <location>
        <begin position="356"/>
        <end position="376"/>
    </location>
</feature>
<feature type="topological domain" description="Lumenal" evidence="1">
    <location>
        <begin position="377"/>
        <end position="378"/>
    </location>
</feature>
<feature type="transmembrane region" description="Helical" evidence="2">
    <location>
        <begin position="379"/>
        <end position="399"/>
    </location>
</feature>
<feature type="topological domain" description="Cytoplasmic" evidence="1">
    <location>
        <begin position="400"/>
        <end position="420"/>
    </location>
</feature>
<feature type="region of interest" description="Disordered" evidence="3">
    <location>
        <begin position="1"/>
        <end position="21"/>
    </location>
</feature>
<feature type="compositionally biased region" description="Polar residues" evidence="3">
    <location>
        <begin position="1"/>
        <end position="11"/>
    </location>
</feature>
<accession>P0CS04</accession>
<accession>Q55P93</accession>
<accession>Q5KE63</accession>
<accession>Q5VJN4</accession>
<keyword id="KW-0968">Cytoplasmic vesicle</keyword>
<keyword id="KW-0256">Endoplasmic reticulum</keyword>
<keyword id="KW-0333">Golgi apparatus</keyword>
<keyword id="KW-0472">Membrane</keyword>
<keyword id="KW-1185">Reference proteome</keyword>
<keyword id="KW-0762">Sugar transport</keyword>
<keyword id="KW-0812">Transmembrane</keyword>
<keyword id="KW-1133">Transmembrane helix</keyword>
<keyword id="KW-0813">Transport</keyword>